<sequence length="284" mass="32696">MKVFILALLALTATTAIAQLETTCSQGFRQYQQQQQPGQRQLLEQMRPCVAFLQQQCRPLRMPFLQTQVEQLSSCQIVQYQCCQQLAQIPEQIRCHAIHNVVEAIMQQQSQQQRQERQQQAQHKSMRMLLENLSLMCNIYVPIQCQQQQQLGQQQQQQLQEQLTPCATFLQHQCSPVTVPFPQIPVDQPTSCQNVQHQCCRQLSQIPEQFRCQAIHNVAEAIRQQQPQQQWQGMYQPQQPAQLESIRMSLQALRSMCSIYIPVQCPAPTAYNIPMVATYTGGAC</sequence>
<reference key="1">
    <citation type="submission" date="2007-03" db="EMBL/GenBank/DDBJ databases">
        <title>Gene cloning and expression of avenin-like protein of wheat.</title>
        <authorList>
            <person name="Wang Y.S."/>
            <person name="Shi C.X."/>
            <person name="Zhan T.L."/>
            <person name="Cheng P."/>
            <person name="He G.Y."/>
        </authorList>
    </citation>
    <scope>NUCLEOTIDE SEQUENCE [GENOMIC DNA]</scope>
    <source>
        <strain>cv. Emai 18</strain>
    </source>
</reference>
<accession>A5A4L5</accession>
<name>AVLB4_WHEAT</name>
<feature type="signal peptide" evidence="2">
    <location>
        <begin position="1"/>
        <end position="18"/>
    </location>
</feature>
<feature type="chain" id="PRO_0000410685" description="Avenin-like b4">
    <location>
        <begin position="19"/>
        <end position="284"/>
    </location>
</feature>
<evidence type="ECO:0000250" key="1"/>
<evidence type="ECO:0000255" key="2"/>
<evidence type="ECO:0000305" key="3"/>
<organism>
    <name type="scientific">Triticum aestivum</name>
    <name type="common">Wheat</name>
    <dbReference type="NCBI Taxonomy" id="4565"/>
    <lineage>
        <taxon>Eukaryota</taxon>
        <taxon>Viridiplantae</taxon>
        <taxon>Streptophyta</taxon>
        <taxon>Embryophyta</taxon>
        <taxon>Tracheophyta</taxon>
        <taxon>Spermatophyta</taxon>
        <taxon>Magnoliopsida</taxon>
        <taxon>Liliopsida</taxon>
        <taxon>Poales</taxon>
        <taxon>Poaceae</taxon>
        <taxon>BOP clade</taxon>
        <taxon>Pooideae</taxon>
        <taxon>Triticodae</taxon>
        <taxon>Triticeae</taxon>
        <taxon>Triticinae</taxon>
        <taxon>Triticum</taxon>
    </lineage>
</organism>
<proteinExistence type="inferred from homology"/>
<dbReference type="EMBL" id="EF526510">
    <property type="protein sequence ID" value="ABP63561.1"/>
    <property type="molecule type" value="Genomic_DNA"/>
</dbReference>
<dbReference type="SMR" id="A5A4L5"/>
<dbReference type="Proteomes" id="UP000019116">
    <property type="component" value="Unplaced"/>
</dbReference>
<dbReference type="ExpressionAtlas" id="A5A4L5">
    <property type="expression patterns" value="baseline and differential"/>
</dbReference>
<dbReference type="GO" id="GO:0045735">
    <property type="term" value="F:nutrient reservoir activity"/>
    <property type="evidence" value="ECO:0007669"/>
    <property type="project" value="UniProtKB-KW"/>
</dbReference>
<dbReference type="CDD" id="cd00261">
    <property type="entry name" value="AAI_SS"/>
    <property type="match status" value="2"/>
</dbReference>
<dbReference type="Gene3D" id="1.10.110.10">
    <property type="entry name" value="Plant lipid-transfer and hydrophobic proteins"/>
    <property type="match status" value="2"/>
</dbReference>
<dbReference type="InterPro" id="IPR036312">
    <property type="entry name" value="Bifun_inhib/LTP/seed_sf"/>
</dbReference>
<dbReference type="InterPro" id="IPR016140">
    <property type="entry name" value="Bifunc_inhib/LTP/seed_store"/>
</dbReference>
<dbReference type="InterPro" id="IPR001954">
    <property type="entry name" value="Glia_glutenin"/>
</dbReference>
<dbReference type="PANTHER" id="PTHR33454:SF11">
    <property type="entry name" value="AVENIN-LIKE B5"/>
    <property type="match status" value="1"/>
</dbReference>
<dbReference type="PANTHER" id="PTHR33454">
    <property type="entry name" value="PROLAMIN PPROL 14P"/>
    <property type="match status" value="1"/>
</dbReference>
<dbReference type="Pfam" id="PF13016">
    <property type="entry name" value="Gliadin"/>
    <property type="match status" value="2"/>
</dbReference>
<dbReference type="PRINTS" id="PR00208">
    <property type="entry name" value="GLIADGLUTEN"/>
</dbReference>
<dbReference type="PRINTS" id="PR00209">
    <property type="entry name" value="GLIADIN"/>
</dbReference>
<dbReference type="SMART" id="SM00499">
    <property type="entry name" value="AAI"/>
    <property type="match status" value="2"/>
</dbReference>
<dbReference type="SUPFAM" id="SSF47699">
    <property type="entry name" value="Bifunctional inhibitor/lipid-transfer protein/seed storage 2S albumin"/>
    <property type="match status" value="2"/>
</dbReference>
<protein>
    <recommendedName>
        <fullName>Avenin-like b4</fullName>
    </recommendedName>
</protein>
<comment type="function">
    <text evidence="1">Seed storage protein. Might be integrated via inter-chain disulfide bonds within the glutenin polymer (By similarity).</text>
</comment>
<comment type="PTM">
    <text evidence="3">Contains disulfide bonds.</text>
</comment>
<comment type="similarity">
    <text evidence="3">Belongs to the prolamin family.</text>
</comment>
<keyword id="KW-1015">Disulfide bond</keyword>
<keyword id="KW-1185">Reference proteome</keyword>
<keyword id="KW-0708">Seed storage protein</keyword>
<keyword id="KW-0732">Signal</keyword>
<keyword id="KW-0758">Storage protein</keyword>